<accession>A0A3G5BIC2</accession>
<reference key="1">
    <citation type="journal article" date="2018" name="Toxins">
        <title>Buzz kill: function and proteomic composition of venom from the giant assassin fly Dolopus genitalis (Diptera: Asilidae).</title>
        <authorList>
            <person name="Walker A.A."/>
            <person name="Dobson J."/>
            <person name="Jin J."/>
            <person name="Robinson S.D."/>
            <person name="Herzig V."/>
            <person name="Vetter I."/>
            <person name="King G.F."/>
            <person name="Fry B.G."/>
        </authorList>
    </citation>
    <scope>NUCLEOTIDE SEQUENCE [MRNA]</scope>
    <scope>MASS SPECTROMETRY</scope>
    <scope>SUBCELLULAR LOCATION</scope>
    <source>
        <tissue>Venom</tissue>
        <tissue>Venom gland</tissue>
    </source>
</reference>
<reference evidence="8" key="2">
    <citation type="journal article" date="2020" name="Insect Biochem. Mol. Biol.">
        <title>Weaponisation 'on the fly': convergent recruitment of knottin and defensin peptide scaffolds into the venom of predatory assassin flies.</title>
        <authorList>
            <person name="Jin J."/>
            <person name="Agwa A.J."/>
            <person name="Szanto T.G."/>
            <person name="Csoti A."/>
            <person name="Panyi G."/>
            <person name="Schroeder C.I."/>
            <person name="Walker A.A."/>
            <person name="King G.F."/>
        </authorList>
    </citation>
    <scope>STRUCTURE BY NMR OF 47-80</scope>
    <scope>FUNCTION</scope>
    <scope>DISULFIDE BONDS</scope>
    <scope>RECOMBINANT EXPRESSION</scope>
    <scope>MASS SPECTROMETRY</scope>
    <scope>SUBCELLULAR LOCATION</scope>
    <source>
        <tissue>Venom</tissue>
    </source>
</reference>
<comment type="function">
    <text evidence="3">Neurotoxin that may modulate ions channels (other than those tested) (PubMed:31870846). In vivo, induces neurotoxic effects when injected into insects (tested on L.cuprina and A.domesticus) (PubMed:31870846).</text>
</comment>
<comment type="subcellular location">
    <subcellularLocation>
        <location evidence="2 3">Secreted</location>
    </subcellularLocation>
</comment>
<comment type="tissue specificity">
    <text evidence="6 7">Expressed by the venom gland.</text>
</comment>
<comment type="domain">
    <text evidence="3">The presence of a 'disulfide through disulfide knot' structurally defines this protein as a knottin.</text>
</comment>
<comment type="mass spectrometry" mass="3906.6" method="MALDI" evidence="2">
    <text>Monoisotopic mass.</text>
</comment>
<comment type="mass spectrometry" mass="3906.8" method="MALDI" evidence="3">
    <text>Monoisotopic mass.</text>
</comment>
<comment type="miscellaneous">
    <text evidence="3">Negative results: the recombinant peptide has no effect on Kv1.3/KCNA3, Kv10.1/KCNH1/EAG1, Kv11.1/KCNH2/ERG1, KCa1.1/KCNMA1, and on the drosophila Shaker IR channel.</text>
</comment>
<comment type="similarity">
    <text evidence="5">Belongs to the asilidin-1 family.</text>
</comment>
<evidence type="ECO:0000255" key="1"/>
<evidence type="ECO:0000269" key="2">
    <source>
    </source>
</evidence>
<evidence type="ECO:0000269" key="3">
    <source>
    </source>
</evidence>
<evidence type="ECO:0000303" key="4">
    <source>
    </source>
</evidence>
<evidence type="ECO:0000305" key="5"/>
<evidence type="ECO:0000305" key="6">
    <source>
    </source>
</evidence>
<evidence type="ECO:0000305" key="7">
    <source>
    </source>
</evidence>
<evidence type="ECO:0007744" key="8">
    <source>
        <dbReference type="PDB" id="6PX7"/>
    </source>
</evidence>
<evidence type="ECO:0007829" key="9">
    <source>
        <dbReference type="PDB" id="6PX7"/>
    </source>
</evidence>
<proteinExistence type="evidence at protein level"/>
<protein>
    <recommendedName>
        <fullName evidence="4">U-Asilidin(1)-Dg12</fullName>
    </recommendedName>
</protein>
<sequence length="80" mass="8756">MARLLVVSVGVFLAVIMLSSETMSLPAGENLPALTLFEAQNQLIGLSQEQRQCKKIGEHCYVADECCSKRCLFYAAKCVS</sequence>
<keyword id="KW-0002">3D-structure</keyword>
<keyword id="KW-1015">Disulfide bond</keyword>
<keyword id="KW-0872">Ion channel impairing toxin</keyword>
<keyword id="KW-0960">Knottin</keyword>
<keyword id="KW-0528">Neurotoxin</keyword>
<keyword id="KW-0964">Secreted</keyword>
<keyword id="KW-0732">Signal</keyword>
<keyword id="KW-0800">Toxin</keyword>
<feature type="signal peptide" evidence="1">
    <location>
        <begin position="1"/>
        <end position="24"/>
    </location>
</feature>
<feature type="propeptide" id="PRO_0000452538" evidence="6">
    <location>
        <begin position="25"/>
        <end position="46"/>
    </location>
</feature>
<feature type="chain" id="PRO_5018286706" description="U-Asilidin(1)-Dg12" evidence="2">
    <location>
        <begin position="47"/>
        <end position="80"/>
    </location>
</feature>
<feature type="disulfide bond" evidence="3 8">
    <location>
        <begin position="53"/>
        <end position="67"/>
    </location>
</feature>
<feature type="disulfide bond" evidence="3 8">
    <location>
        <begin position="60"/>
        <end position="71"/>
    </location>
</feature>
<feature type="disulfide bond" evidence="3 8">
    <location>
        <begin position="66"/>
        <end position="78"/>
    </location>
</feature>
<feature type="turn" evidence="9">
    <location>
        <begin position="63"/>
        <end position="65"/>
    </location>
</feature>
<feature type="turn" evidence="9">
    <location>
        <begin position="73"/>
        <end position="75"/>
    </location>
</feature>
<organism>
    <name type="scientific">Dolopus genitalis</name>
    <name type="common">Giant Australian assassin fly</name>
    <name type="synonym">Asilus genitalis</name>
    <dbReference type="NCBI Taxonomy" id="2488630"/>
    <lineage>
        <taxon>Eukaryota</taxon>
        <taxon>Metazoa</taxon>
        <taxon>Ecdysozoa</taxon>
        <taxon>Arthropoda</taxon>
        <taxon>Hexapoda</taxon>
        <taxon>Insecta</taxon>
        <taxon>Pterygota</taxon>
        <taxon>Neoptera</taxon>
        <taxon>Endopterygota</taxon>
        <taxon>Diptera</taxon>
        <taxon>Brachycera</taxon>
        <taxon>Muscomorpha</taxon>
        <taxon>Asiloidea</taxon>
        <taxon>Asilidae</taxon>
        <taxon>Asilinae</taxon>
        <taxon>Dolopus</taxon>
    </lineage>
</organism>
<dbReference type="EMBL" id="MK075130">
    <property type="protein sequence ID" value="AYV99533.1"/>
    <property type="molecule type" value="mRNA"/>
</dbReference>
<dbReference type="PDB" id="6PX7">
    <property type="method" value="NMR"/>
    <property type="chains" value="A=47-80"/>
</dbReference>
<dbReference type="PDBsum" id="6PX7"/>
<dbReference type="BMRB" id="A0A3G5BIC2"/>
<dbReference type="SMR" id="A0A3G5BIC2"/>
<dbReference type="GO" id="GO:0005576">
    <property type="term" value="C:extracellular region"/>
    <property type="evidence" value="ECO:0007669"/>
    <property type="project" value="UniProtKB-SubCell"/>
</dbReference>
<dbReference type="GO" id="GO:0099106">
    <property type="term" value="F:ion channel regulator activity"/>
    <property type="evidence" value="ECO:0007669"/>
    <property type="project" value="UniProtKB-KW"/>
</dbReference>
<dbReference type="GO" id="GO:0090729">
    <property type="term" value="F:toxin activity"/>
    <property type="evidence" value="ECO:0007669"/>
    <property type="project" value="UniProtKB-KW"/>
</dbReference>
<name>AS1C_DOLGE</name>